<gene>
    <name evidence="8" type="primary">Oxct1</name>
    <name evidence="2" type="synonym">Oxct</name>
    <name evidence="2" type="synonym">Scot</name>
</gene>
<comment type="function">
    <text evidence="1 2">Key enzyme for ketone body catabolism. Catalyzes the first, rate-limiting step of ketone body utilization in extrahepatic tissues, by transferring coenzyme A (CoA) from a donor thiolester species (succinyl-CoA) to an acceptor carboxylate (acetoacetate), and produces acetoacetyl-CoA. Acetoacetyl-CoA is further metabolized by acetoacetyl-CoA thiolase into two acetyl-CoA molecules which enter the citric acid cycle for energy production (By similarity). Forms a dimeric enzyme where both of the subunits are able to form enzyme-CoA thiolester intermediates, but only one subunit is competent to transfer the CoA moiety to the acceptor carboxylate (3-oxo acid) and produce a new acyl-CoA. Formation of the enzyme-CoA intermediate proceeds via an unstable anhydride species formed between the carboxylate groups of the enzyme and substrate (By similarity).</text>
</comment>
<comment type="catalytic activity">
    <reaction evidence="1">
        <text>a 3-oxo acid + succinyl-CoA = a 3-oxoacyl-CoA + succinate</text>
        <dbReference type="Rhea" id="RHEA:24564"/>
        <dbReference type="ChEBI" id="CHEBI:30031"/>
        <dbReference type="ChEBI" id="CHEBI:35973"/>
        <dbReference type="ChEBI" id="CHEBI:57292"/>
        <dbReference type="ChEBI" id="CHEBI:90726"/>
        <dbReference type="EC" id="2.8.3.5"/>
    </reaction>
    <physiologicalReaction direction="left-to-right" evidence="1">
        <dbReference type="Rhea" id="RHEA:24565"/>
    </physiologicalReaction>
</comment>
<comment type="catalytic activity">
    <reaction evidence="1">
        <text>acetoacetate + succinyl-CoA = acetoacetyl-CoA + succinate</text>
        <dbReference type="Rhea" id="RHEA:25480"/>
        <dbReference type="ChEBI" id="CHEBI:13705"/>
        <dbReference type="ChEBI" id="CHEBI:30031"/>
        <dbReference type="ChEBI" id="CHEBI:57286"/>
        <dbReference type="ChEBI" id="CHEBI:57292"/>
        <dbReference type="EC" id="2.8.3.5"/>
    </reaction>
    <physiologicalReaction direction="left-to-right" evidence="1">
        <dbReference type="Rhea" id="RHEA:25481"/>
    </physiologicalReaction>
</comment>
<comment type="pathway">
    <text evidence="1">Ketone metabolism; succinyl-CoA degradation; acetoacetyl-CoA from succinyl-CoA: step 1/1.</text>
</comment>
<comment type="subunit">
    <text evidence="2">Homodimer. Only one subunit is competent to transfer the CoA moiety to the acceptor carboxylate (3-oxo acid).</text>
</comment>
<comment type="subcellular location">
    <subcellularLocation>
        <location evidence="6">Mitochondrion</location>
    </subcellularLocation>
</comment>
<comment type="similarity">
    <text evidence="4">Belongs to the 3-oxoacid CoA-transferase family.</text>
</comment>
<reference evidence="7 9" key="1">
    <citation type="submission" date="2005-09" db="EMBL/GenBank/DDBJ databases">
        <authorList>
            <person name="Mural R.J."/>
            <person name="Adams M.D."/>
            <person name="Myers E.W."/>
            <person name="Smith H.O."/>
            <person name="Venter J.C."/>
        </authorList>
    </citation>
    <scope>NUCLEOTIDE SEQUENCE [LARGE SCALE GENOMIC DNA]</scope>
    <source>
        <strain>Brown Norway</strain>
    </source>
</reference>
<reference evidence="8" key="2">
    <citation type="journal article" date="2004" name="Genome Res.">
        <title>The status, quality, and expansion of the NIH full-length cDNA project: the Mammalian Gene Collection (MGC).</title>
        <authorList>
            <consortium name="The MGC Project Team"/>
        </authorList>
    </citation>
    <scope>NUCLEOTIDE SEQUENCE [LARGE SCALE MRNA]</scope>
    <source>
        <strain>Brown Norway</strain>
        <tissue evidence="8">Spleen</tissue>
    </source>
</reference>
<reference key="3">
    <citation type="journal article" date="2009" name="Proteomics">
        <title>Proteome profile of the mature rat olfactory bulb.</title>
        <authorList>
            <person name="Maurya D.K."/>
            <person name="Sundaram C.S."/>
            <person name="Bhargava P."/>
        </authorList>
    </citation>
    <scope>IDENTIFICATION BY MASS SPECTROMETRY</scope>
    <scope>SUBCELLULAR LOCATION</scope>
</reference>
<organism>
    <name type="scientific">Rattus norvegicus</name>
    <name type="common">Rat</name>
    <dbReference type="NCBI Taxonomy" id="10116"/>
    <lineage>
        <taxon>Eukaryota</taxon>
        <taxon>Metazoa</taxon>
        <taxon>Chordata</taxon>
        <taxon>Craniata</taxon>
        <taxon>Vertebrata</taxon>
        <taxon>Euteleostomi</taxon>
        <taxon>Mammalia</taxon>
        <taxon>Eutheria</taxon>
        <taxon>Euarchontoglires</taxon>
        <taxon>Glires</taxon>
        <taxon>Rodentia</taxon>
        <taxon>Myomorpha</taxon>
        <taxon>Muroidea</taxon>
        <taxon>Muridae</taxon>
        <taxon>Murinae</taxon>
        <taxon>Rattus</taxon>
    </lineage>
</organism>
<dbReference type="EC" id="2.8.3.5" evidence="2"/>
<dbReference type="EMBL" id="CH474048">
    <property type="protein sequence ID" value="EDL75738.1"/>
    <property type="molecule type" value="Genomic_DNA"/>
</dbReference>
<dbReference type="EMBL" id="BC166478">
    <property type="protein sequence ID" value="AAI66478.1"/>
    <property type="molecule type" value="mRNA"/>
</dbReference>
<dbReference type="RefSeq" id="NP_001121052.1">
    <property type="nucleotide sequence ID" value="NM_001127580.1"/>
</dbReference>
<dbReference type="SMR" id="B2GV06"/>
<dbReference type="BioGRID" id="604980">
    <property type="interactions" value="2"/>
</dbReference>
<dbReference type="FunCoup" id="B2GV06">
    <property type="interactions" value="1800"/>
</dbReference>
<dbReference type="STRING" id="10116.ENSRNOP00000063646"/>
<dbReference type="GlyGen" id="B2GV06">
    <property type="glycosylation" value="2 sites, 1 O-linked glycan (2 sites)"/>
</dbReference>
<dbReference type="iPTMnet" id="B2GV06"/>
<dbReference type="PhosphoSitePlus" id="B2GV06"/>
<dbReference type="SwissPalm" id="B2GV06"/>
<dbReference type="jPOST" id="B2GV06"/>
<dbReference type="PaxDb" id="10116-ENSRNOP00000063646"/>
<dbReference type="PeptideAtlas" id="B2GV06"/>
<dbReference type="GeneID" id="690163"/>
<dbReference type="KEGG" id="rno:690163"/>
<dbReference type="AGR" id="RGD:1584008"/>
<dbReference type="CTD" id="5019"/>
<dbReference type="RGD" id="1584008">
    <property type="gene designation" value="Oxct1"/>
</dbReference>
<dbReference type="VEuPathDB" id="HostDB:ENSRNOG00000043094"/>
<dbReference type="eggNOG" id="KOG3822">
    <property type="taxonomic scope" value="Eukaryota"/>
</dbReference>
<dbReference type="HOGENOM" id="CLU_019942_1_3_1"/>
<dbReference type="InParanoid" id="B2GV06"/>
<dbReference type="OrthoDB" id="31971at9989"/>
<dbReference type="PhylomeDB" id="B2GV06"/>
<dbReference type="BRENDA" id="2.8.3.5">
    <property type="organism ID" value="5301"/>
</dbReference>
<dbReference type="Reactome" id="R-RNO-77108">
    <property type="pathway name" value="Utilization of Ketone Bodies"/>
</dbReference>
<dbReference type="Reactome" id="R-RNO-9837999">
    <property type="pathway name" value="Mitochondrial protein degradation"/>
</dbReference>
<dbReference type="UniPathway" id="UPA00929">
    <property type="reaction ID" value="UER00894"/>
</dbReference>
<dbReference type="PRO" id="PR:B2GV06"/>
<dbReference type="Proteomes" id="UP000002494">
    <property type="component" value="Chromosome 2"/>
</dbReference>
<dbReference type="Proteomes" id="UP000234681">
    <property type="component" value="Chromosome 2"/>
</dbReference>
<dbReference type="Bgee" id="ENSRNOG00000043094">
    <property type="expression patterns" value="Expressed in heart and 19 other cell types or tissues"/>
</dbReference>
<dbReference type="GO" id="GO:0005739">
    <property type="term" value="C:mitochondrion"/>
    <property type="evidence" value="ECO:0000266"/>
    <property type="project" value="RGD"/>
</dbReference>
<dbReference type="GO" id="GO:0042802">
    <property type="term" value="F:identical protein binding"/>
    <property type="evidence" value="ECO:0000353"/>
    <property type="project" value="RGD"/>
</dbReference>
<dbReference type="GO" id="GO:0042803">
    <property type="term" value="F:protein homodimerization activity"/>
    <property type="evidence" value="ECO:0000266"/>
    <property type="project" value="RGD"/>
</dbReference>
<dbReference type="GO" id="GO:0008260">
    <property type="term" value="F:succinyl-CoA:3-oxo-acid CoA-transferase activity"/>
    <property type="evidence" value="ECO:0000314"/>
    <property type="project" value="RGD"/>
</dbReference>
<dbReference type="GO" id="GO:0060612">
    <property type="term" value="P:adipose tissue development"/>
    <property type="evidence" value="ECO:0000270"/>
    <property type="project" value="RGD"/>
</dbReference>
<dbReference type="GO" id="GO:0007507">
    <property type="term" value="P:heart development"/>
    <property type="evidence" value="ECO:0000270"/>
    <property type="project" value="RGD"/>
</dbReference>
<dbReference type="GO" id="GO:0046952">
    <property type="term" value="P:ketone body catabolic process"/>
    <property type="evidence" value="ECO:0000266"/>
    <property type="project" value="RGD"/>
</dbReference>
<dbReference type="GO" id="GO:1902224">
    <property type="term" value="P:ketone body metabolic process"/>
    <property type="evidence" value="ECO:0000266"/>
    <property type="project" value="RGD"/>
</dbReference>
<dbReference type="GO" id="GO:0042182">
    <property type="term" value="P:ketone catabolic process"/>
    <property type="evidence" value="ECO:0000266"/>
    <property type="project" value="RGD"/>
</dbReference>
<dbReference type="GO" id="GO:0035774">
    <property type="term" value="P:positive regulation of insulin secretion involved in cellular response to glucose stimulus"/>
    <property type="evidence" value="ECO:0000315"/>
    <property type="project" value="RGD"/>
</dbReference>
<dbReference type="GO" id="GO:0014823">
    <property type="term" value="P:response to activity"/>
    <property type="evidence" value="ECO:0000270"/>
    <property type="project" value="RGD"/>
</dbReference>
<dbReference type="GO" id="GO:0045471">
    <property type="term" value="P:response to ethanol"/>
    <property type="evidence" value="ECO:0000270"/>
    <property type="project" value="RGD"/>
</dbReference>
<dbReference type="GO" id="GO:0009725">
    <property type="term" value="P:response to hormone"/>
    <property type="evidence" value="ECO:0000270"/>
    <property type="project" value="RGD"/>
</dbReference>
<dbReference type="GO" id="GO:0007584">
    <property type="term" value="P:response to nutrient"/>
    <property type="evidence" value="ECO:0000270"/>
    <property type="project" value="RGD"/>
</dbReference>
<dbReference type="GO" id="GO:0042594">
    <property type="term" value="P:response to starvation"/>
    <property type="evidence" value="ECO:0000270"/>
    <property type="project" value="RGD"/>
</dbReference>
<dbReference type="GO" id="GO:0009410">
    <property type="term" value="P:response to xenobiotic stimulus"/>
    <property type="evidence" value="ECO:0000270"/>
    <property type="project" value="RGD"/>
</dbReference>
<dbReference type="FunFam" id="3.40.1080.10:FF:000001">
    <property type="entry name" value="Succinyl-coa:3-ketoacid-coenzyme a transferase subunit b"/>
    <property type="match status" value="1"/>
</dbReference>
<dbReference type="FunFam" id="3.40.1080.10:FF:000002">
    <property type="entry name" value="Succinyl-CoA:3-ketoacid-coenzyme A transferase, mitochondrial"/>
    <property type="match status" value="1"/>
</dbReference>
<dbReference type="Gene3D" id="3.40.1080.10">
    <property type="entry name" value="Glutaconate Coenzyme A-transferase"/>
    <property type="match status" value="2"/>
</dbReference>
<dbReference type="InterPro" id="IPR012792">
    <property type="entry name" value="3-oxoacid_CoA-transf_A"/>
</dbReference>
<dbReference type="InterPro" id="IPR012791">
    <property type="entry name" value="3-oxoacid_CoA-transf_B"/>
</dbReference>
<dbReference type="InterPro" id="IPR014388">
    <property type="entry name" value="3-oxoacid_CoA-transferase"/>
</dbReference>
<dbReference type="InterPro" id="IPR004165">
    <property type="entry name" value="CoA_trans_fam_I"/>
</dbReference>
<dbReference type="InterPro" id="IPR004164">
    <property type="entry name" value="CoA_transf_AS"/>
</dbReference>
<dbReference type="InterPro" id="IPR004163">
    <property type="entry name" value="CoA_transf_BS"/>
</dbReference>
<dbReference type="InterPro" id="IPR037171">
    <property type="entry name" value="NagB/RpiA_transferase-like"/>
</dbReference>
<dbReference type="NCBIfam" id="TIGR02429">
    <property type="entry name" value="pcaI_scoA_fam"/>
    <property type="match status" value="1"/>
</dbReference>
<dbReference type="NCBIfam" id="TIGR02428">
    <property type="entry name" value="pcaJ_scoB_fam"/>
    <property type="match status" value="1"/>
</dbReference>
<dbReference type="PANTHER" id="PTHR13707">
    <property type="entry name" value="KETOACID-COENZYME A TRANSFERASE"/>
    <property type="match status" value="1"/>
</dbReference>
<dbReference type="PANTHER" id="PTHR13707:SF30">
    <property type="entry name" value="SUCCINYL-COA:3-KETOACID COENZYME A TRANSFERASE 1, MITOCHONDRIAL"/>
    <property type="match status" value="1"/>
</dbReference>
<dbReference type="Pfam" id="PF01144">
    <property type="entry name" value="CoA_trans"/>
    <property type="match status" value="2"/>
</dbReference>
<dbReference type="PIRSF" id="PIRSF000858">
    <property type="entry name" value="SCOT-t"/>
    <property type="match status" value="1"/>
</dbReference>
<dbReference type="SMART" id="SM00882">
    <property type="entry name" value="CoA_trans"/>
    <property type="match status" value="2"/>
</dbReference>
<dbReference type="SUPFAM" id="SSF100950">
    <property type="entry name" value="NagB/RpiA/CoA transferase-like"/>
    <property type="match status" value="2"/>
</dbReference>
<dbReference type="PROSITE" id="PS01273">
    <property type="entry name" value="COA_TRANSF_1"/>
    <property type="match status" value="1"/>
</dbReference>
<dbReference type="PROSITE" id="PS01274">
    <property type="entry name" value="COA_TRANSF_2"/>
    <property type="match status" value="1"/>
</dbReference>
<accession>B2GV06</accession>
<name>SCOT1_RAT</name>
<evidence type="ECO:0000250" key="1">
    <source>
        <dbReference type="UniProtKB" id="P55809"/>
    </source>
</evidence>
<evidence type="ECO:0000250" key="2">
    <source>
        <dbReference type="UniProtKB" id="Q29551"/>
    </source>
</evidence>
<evidence type="ECO:0000250" key="3">
    <source>
        <dbReference type="UniProtKB" id="Q9D0K2"/>
    </source>
</evidence>
<evidence type="ECO:0000255" key="4"/>
<evidence type="ECO:0000255" key="5">
    <source>
        <dbReference type="PROSITE-ProRule" id="PRU10034"/>
    </source>
</evidence>
<evidence type="ECO:0000269" key="6">
    <source>
    </source>
</evidence>
<evidence type="ECO:0000305" key="7"/>
<evidence type="ECO:0000312" key="8">
    <source>
        <dbReference type="EMBL" id="AAI66478.1"/>
    </source>
</evidence>
<evidence type="ECO:0000312" key="9">
    <source>
        <dbReference type="EMBL" id="EDL75738.1"/>
    </source>
</evidence>
<keyword id="KW-0443">Lipid metabolism</keyword>
<keyword id="KW-0496">Mitochondrion</keyword>
<keyword id="KW-0597">Phosphoprotein</keyword>
<keyword id="KW-1185">Reference proteome</keyword>
<keyword id="KW-0808">Transferase</keyword>
<keyword id="KW-0809">Transit peptide</keyword>
<feature type="transit peptide" description="Mitochondrion" evidence="1">
    <location>
        <begin position="1"/>
        <end position="39"/>
    </location>
</feature>
<feature type="chain" id="PRO_0000349127" description="Succinyl-CoA:3-ketoacid coenzyme A transferase 1, mitochondrial">
    <location>
        <begin position="40"/>
        <end position="520"/>
    </location>
</feature>
<feature type="active site" description="5-glutamyl coenzyme A thioester intermediate" evidence="5">
    <location>
        <position position="344"/>
    </location>
</feature>
<feature type="modified residue" description="Phosphoserine" evidence="1">
    <location>
        <position position="170"/>
    </location>
</feature>
<feature type="modified residue" description="N6-succinyllysine" evidence="3">
    <location>
        <position position="185"/>
    </location>
</feature>
<feature type="modified residue" description="N6-succinyllysine" evidence="3">
    <location>
        <position position="418"/>
    </location>
</feature>
<feature type="modified residue" description="N6-succinyllysine" evidence="3">
    <location>
        <position position="421"/>
    </location>
</feature>
<feature type="modified residue" description="N6-succinyllysine" evidence="3">
    <location>
        <position position="455"/>
    </location>
</feature>
<sequence length="520" mass="56204">MAALKLLSSGLRLCASARNSRGALHKGCACYFSVSTRHHTKFYTDPVEAVKDIPNGATLLVGGFGLCGIPENLIGALLKTGVKDLTAVSNNAGVDNFGLGLLLRSKQIKRMISSYVGENAEFERQFLSGELEVELTPQGTLAERIRAGGAGVPAFYTSTGYGTLVQEGGSPIKYNKDGSVAIASKPREVREFRGQHFILEEAITGDFALVKAWKADRAGNVIFRKSARNFNLPMCKAAGTTVVEVEEIVDIGSFAPEDIHIPKIYVHRLIKGEKYEKRIERLSLRKEGEGKAKSGKPGEDVRERIIKRAALEFEDGMYANLGIGIPLLASNFISPNMTVHLQSENGVLGLGPYPLKDEADADLINAGKETVTVLPGASFFSSDESFAMIRGGHVNLTMLGAMQVSKYGDLANWMIPGKMVKGMGGAMDLVSSSKTKVVVTMEHSAKGNAHKIMEKCTLPLTGKQCVNRIITEKGVFDVDKKNGLTLIELWEGLTVDDIRKSTGCDFAVSPNLMPMQQIST</sequence>
<proteinExistence type="evidence at protein level"/>
<protein>
    <recommendedName>
        <fullName>Succinyl-CoA:3-ketoacid coenzyme A transferase 1, mitochondrial</fullName>
        <shortName>SCOT</shortName>
        <ecNumber evidence="2">2.8.3.5</ecNumber>
    </recommendedName>
    <alternativeName>
        <fullName>3-oxoacid CoA-transferase 1</fullName>
    </alternativeName>
    <alternativeName>
        <fullName>Somatic-type succinyl-CoA:3-oxoacid CoA-transferase</fullName>
        <shortName>SCOT-s</shortName>
    </alternativeName>
    <alternativeName>
        <fullName>Succinyl-CoA:3-oxoacid CoA transferase</fullName>
    </alternativeName>
</protein>